<keyword id="KW-1015">Disulfide bond</keyword>
<keyword id="KW-0325">Glycoprotein</keyword>
<keyword id="KW-0646">Protease inhibitor</keyword>
<keyword id="KW-1185">Reference proteome</keyword>
<keyword id="KW-0964">Secreted</keyword>
<keyword id="KW-0722">Serine protease inhibitor</keyword>
<keyword id="KW-0732">Signal</keyword>
<dbReference type="EMBL" id="AK139149">
    <property type="protein sequence ID" value="BAE23902.1"/>
    <property type="molecule type" value="mRNA"/>
</dbReference>
<dbReference type="CCDS" id="CCDS50305.1"/>
<dbReference type="RefSeq" id="NP_001161895.1">
    <property type="nucleotide sequence ID" value="NM_001168423.2"/>
</dbReference>
<dbReference type="RefSeq" id="XP_030106088.1">
    <property type="nucleotide sequence ID" value="XM_030250228.2"/>
</dbReference>
<dbReference type="RefSeq" id="XP_030106089.1">
    <property type="nucleotide sequence ID" value="XM_030250229.2"/>
</dbReference>
<dbReference type="SMR" id="Q3UTS8"/>
<dbReference type="FunCoup" id="Q3UTS8">
    <property type="interactions" value="3"/>
</dbReference>
<dbReference type="STRING" id="10090.ENSMUSP00000095165"/>
<dbReference type="GlyCosmos" id="Q3UTS8">
    <property type="glycosylation" value="1 site, No reported glycans"/>
</dbReference>
<dbReference type="GlyGen" id="Q3UTS8">
    <property type="glycosylation" value="1 site"/>
</dbReference>
<dbReference type="PhosphoSitePlus" id="Q3UTS8"/>
<dbReference type="PaxDb" id="10090-ENSMUSP00000095165"/>
<dbReference type="ProteomicsDB" id="267011"/>
<dbReference type="Antibodypedia" id="49010">
    <property type="antibodies" value="7 antibodies from 6 providers"/>
</dbReference>
<dbReference type="Ensembl" id="ENSMUST00000097557.5">
    <property type="protein sequence ID" value="ENSMUSP00000095165.4"/>
    <property type="gene ID" value="ENSMUSG00000073551.6"/>
</dbReference>
<dbReference type="Ensembl" id="ENSMUST00000235190.2">
    <property type="protein sequence ID" value="ENSMUSP00000157623.2"/>
    <property type="gene ID" value="ENSMUSG00000073551.6"/>
</dbReference>
<dbReference type="GeneID" id="100038417"/>
<dbReference type="KEGG" id="mmu:100038417"/>
<dbReference type="UCSC" id="uc012bdy.1">
    <property type="organism name" value="mouse"/>
</dbReference>
<dbReference type="AGR" id="MGI:3642511"/>
<dbReference type="CTD" id="153218"/>
<dbReference type="MGI" id="MGI:3642511">
    <property type="gene designation" value="Spink13"/>
</dbReference>
<dbReference type="VEuPathDB" id="HostDB:ENSMUSG00000073551"/>
<dbReference type="eggNOG" id="KOG3649">
    <property type="taxonomic scope" value="Eukaryota"/>
</dbReference>
<dbReference type="GeneTree" id="ENSGT00400000023784"/>
<dbReference type="HOGENOM" id="CLU_161738_0_0_1"/>
<dbReference type="InParanoid" id="Q3UTS8"/>
<dbReference type="OMA" id="FFCVEQW"/>
<dbReference type="OrthoDB" id="126772at2759"/>
<dbReference type="PhylomeDB" id="Q3UTS8"/>
<dbReference type="BioGRID-ORCS" id="100038417">
    <property type="hits" value="2 hits in 75 CRISPR screens"/>
</dbReference>
<dbReference type="ChiTaRS" id="Spink13">
    <property type="organism name" value="mouse"/>
</dbReference>
<dbReference type="PRO" id="PR:Q3UTS8"/>
<dbReference type="Proteomes" id="UP000000589">
    <property type="component" value="Chromosome 18"/>
</dbReference>
<dbReference type="RNAct" id="Q3UTS8">
    <property type="molecule type" value="protein"/>
</dbReference>
<dbReference type="Bgee" id="ENSMUSG00000073551">
    <property type="expression patterns" value="Expressed in mesodermal cell in embryo and 12 other cell types or tissues"/>
</dbReference>
<dbReference type="GO" id="GO:0005576">
    <property type="term" value="C:extracellular region"/>
    <property type="evidence" value="ECO:0007669"/>
    <property type="project" value="UniProtKB-SubCell"/>
</dbReference>
<dbReference type="GO" id="GO:0004867">
    <property type="term" value="F:serine-type endopeptidase inhibitor activity"/>
    <property type="evidence" value="ECO:0007669"/>
    <property type="project" value="UniProtKB-KW"/>
</dbReference>
<dbReference type="GO" id="GO:1902225">
    <property type="term" value="P:negative regulation of acrosome reaction"/>
    <property type="evidence" value="ECO:0000250"/>
    <property type="project" value="UniProtKB"/>
</dbReference>
<dbReference type="FunFam" id="3.30.60.30:FF:000085">
    <property type="entry name" value="Serine protease inhibitor Kazal-type 13"/>
    <property type="match status" value="1"/>
</dbReference>
<dbReference type="Gene3D" id="3.30.60.30">
    <property type="match status" value="1"/>
</dbReference>
<dbReference type="InterPro" id="IPR002350">
    <property type="entry name" value="Kazal_dom"/>
</dbReference>
<dbReference type="InterPro" id="IPR036058">
    <property type="entry name" value="Kazal_dom_sf"/>
</dbReference>
<dbReference type="PANTHER" id="PTHR21312">
    <property type="entry name" value="SERINE PROTEASE INHIBITOR"/>
    <property type="match status" value="1"/>
</dbReference>
<dbReference type="PANTHER" id="PTHR21312:SF36">
    <property type="entry name" value="SERINE PROTEASE INHIBITOR KAZAL-TYPE 13"/>
    <property type="match status" value="1"/>
</dbReference>
<dbReference type="Pfam" id="PF00050">
    <property type="entry name" value="Kazal_1"/>
    <property type="match status" value="1"/>
</dbReference>
<dbReference type="SMART" id="SM00280">
    <property type="entry name" value="KAZAL"/>
    <property type="match status" value="1"/>
</dbReference>
<dbReference type="SUPFAM" id="SSF100895">
    <property type="entry name" value="Kazal-type serine protease inhibitors"/>
    <property type="match status" value="1"/>
</dbReference>
<dbReference type="PROSITE" id="PS00282">
    <property type="entry name" value="KAZAL_1"/>
    <property type="match status" value="1"/>
</dbReference>
<dbReference type="PROSITE" id="PS51465">
    <property type="entry name" value="KAZAL_2"/>
    <property type="match status" value="1"/>
</dbReference>
<sequence length="97" mass="11530">MKRSGCWHQRMLLSLVLLTWTHVTFSALIRSHNFSRWPKPPCKMYYPIDPDYEANCPDVKAYVCATNGLTYKNECFFCIDRWEFGPHIQFVKYGKCE</sequence>
<feature type="signal peptide" evidence="2">
    <location>
        <begin position="1"/>
        <end position="26"/>
    </location>
</feature>
<feature type="chain" id="PRO_0000344511" description="Serine protease inhibitor Kazal-type 13">
    <location>
        <begin position="27"/>
        <end position="97"/>
    </location>
</feature>
<feature type="domain" description="Kazal-like" evidence="3">
    <location>
        <begin position="36"/>
        <end position="97"/>
    </location>
</feature>
<feature type="site" description="Reactive bond" evidence="3">
    <location>
        <begin position="58"/>
        <end position="59"/>
    </location>
</feature>
<feature type="glycosylation site" description="N-linked (GlcNAc...) asparagine" evidence="2">
    <location>
        <position position="33"/>
    </location>
</feature>
<feature type="disulfide bond" evidence="3">
    <location>
        <begin position="42"/>
        <end position="78"/>
    </location>
</feature>
<feature type="disulfide bond" evidence="3">
    <location>
        <begin position="56"/>
        <end position="75"/>
    </location>
</feature>
<feature type="disulfide bond" evidence="3">
    <location>
        <begin position="64"/>
        <end position="96"/>
    </location>
</feature>
<reference key="1">
    <citation type="journal article" date="2005" name="Science">
        <title>The transcriptional landscape of the mammalian genome.</title>
        <authorList>
            <person name="Carninci P."/>
            <person name="Kasukawa T."/>
            <person name="Katayama S."/>
            <person name="Gough J."/>
            <person name="Frith M.C."/>
            <person name="Maeda N."/>
            <person name="Oyama R."/>
            <person name="Ravasi T."/>
            <person name="Lenhard B."/>
            <person name="Wells C."/>
            <person name="Kodzius R."/>
            <person name="Shimokawa K."/>
            <person name="Bajic V.B."/>
            <person name="Brenner S.E."/>
            <person name="Batalov S."/>
            <person name="Forrest A.R."/>
            <person name="Zavolan M."/>
            <person name="Davis M.J."/>
            <person name="Wilming L.G."/>
            <person name="Aidinis V."/>
            <person name="Allen J.E."/>
            <person name="Ambesi-Impiombato A."/>
            <person name="Apweiler R."/>
            <person name="Aturaliya R.N."/>
            <person name="Bailey T.L."/>
            <person name="Bansal M."/>
            <person name="Baxter L."/>
            <person name="Beisel K.W."/>
            <person name="Bersano T."/>
            <person name="Bono H."/>
            <person name="Chalk A.M."/>
            <person name="Chiu K.P."/>
            <person name="Choudhary V."/>
            <person name="Christoffels A."/>
            <person name="Clutterbuck D.R."/>
            <person name="Crowe M.L."/>
            <person name="Dalla E."/>
            <person name="Dalrymple B.P."/>
            <person name="de Bono B."/>
            <person name="Della Gatta G."/>
            <person name="di Bernardo D."/>
            <person name="Down T."/>
            <person name="Engstrom P."/>
            <person name="Fagiolini M."/>
            <person name="Faulkner G."/>
            <person name="Fletcher C.F."/>
            <person name="Fukushima T."/>
            <person name="Furuno M."/>
            <person name="Futaki S."/>
            <person name="Gariboldi M."/>
            <person name="Georgii-Hemming P."/>
            <person name="Gingeras T.R."/>
            <person name="Gojobori T."/>
            <person name="Green R.E."/>
            <person name="Gustincich S."/>
            <person name="Harbers M."/>
            <person name="Hayashi Y."/>
            <person name="Hensch T.K."/>
            <person name="Hirokawa N."/>
            <person name="Hill D."/>
            <person name="Huminiecki L."/>
            <person name="Iacono M."/>
            <person name="Ikeo K."/>
            <person name="Iwama A."/>
            <person name="Ishikawa T."/>
            <person name="Jakt M."/>
            <person name="Kanapin A."/>
            <person name="Katoh M."/>
            <person name="Kawasawa Y."/>
            <person name="Kelso J."/>
            <person name="Kitamura H."/>
            <person name="Kitano H."/>
            <person name="Kollias G."/>
            <person name="Krishnan S.P."/>
            <person name="Kruger A."/>
            <person name="Kummerfeld S.K."/>
            <person name="Kurochkin I.V."/>
            <person name="Lareau L.F."/>
            <person name="Lazarevic D."/>
            <person name="Lipovich L."/>
            <person name="Liu J."/>
            <person name="Liuni S."/>
            <person name="McWilliam S."/>
            <person name="Madan Babu M."/>
            <person name="Madera M."/>
            <person name="Marchionni L."/>
            <person name="Matsuda H."/>
            <person name="Matsuzawa S."/>
            <person name="Miki H."/>
            <person name="Mignone F."/>
            <person name="Miyake S."/>
            <person name="Morris K."/>
            <person name="Mottagui-Tabar S."/>
            <person name="Mulder N."/>
            <person name="Nakano N."/>
            <person name="Nakauchi H."/>
            <person name="Ng P."/>
            <person name="Nilsson R."/>
            <person name="Nishiguchi S."/>
            <person name="Nishikawa S."/>
            <person name="Nori F."/>
            <person name="Ohara O."/>
            <person name="Okazaki Y."/>
            <person name="Orlando V."/>
            <person name="Pang K.C."/>
            <person name="Pavan W.J."/>
            <person name="Pavesi G."/>
            <person name="Pesole G."/>
            <person name="Petrovsky N."/>
            <person name="Piazza S."/>
            <person name="Reed J."/>
            <person name="Reid J.F."/>
            <person name="Ring B.Z."/>
            <person name="Ringwald M."/>
            <person name="Rost B."/>
            <person name="Ruan Y."/>
            <person name="Salzberg S.L."/>
            <person name="Sandelin A."/>
            <person name="Schneider C."/>
            <person name="Schoenbach C."/>
            <person name="Sekiguchi K."/>
            <person name="Semple C.A."/>
            <person name="Seno S."/>
            <person name="Sessa L."/>
            <person name="Sheng Y."/>
            <person name="Shibata Y."/>
            <person name="Shimada H."/>
            <person name="Shimada K."/>
            <person name="Silva D."/>
            <person name="Sinclair B."/>
            <person name="Sperling S."/>
            <person name="Stupka E."/>
            <person name="Sugiura K."/>
            <person name="Sultana R."/>
            <person name="Takenaka Y."/>
            <person name="Taki K."/>
            <person name="Tammoja K."/>
            <person name="Tan S.L."/>
            <person name="Tang S."/>
            <person name="Taylor M.S."/>
            <person name="Tegner J."/>
            <person name="Teichmann S.A."/>
            <person name="Ueda H.R."/>
            <person name="van Nimwegen E."/>
            <person name="Verardo R."/>
            <person name="Wei C.L."/>
            <person name="Yagi K."/>
            <person name="Yamanishi H."/>
            <person name="Zabarovsky E."/>
            <person name="Zhu S."/>
            <person name="Zimmer A."/>
            <person name="Hide W."/>
            <person name="Bult C."/>
            <person name="Grimmond S.M."/>
            <person name="Teasdale R.D."/>
            <person name="Liu E.T."/>
            <person name="Brusic V."/>
            <person name="Quackenbush J."/>
            <person name="Wahlestedt C."/>
            <person name="Mattick J.S."/>
            <person name="Hume D.A."/>
            <person name="Kai C."/>
            <person name="Sasaki D."/>
            <person name="Tomaru Y."/>
            <person name="Fukuda S."/>
            <person name="Kanamori-Katayama M."/>
            <person name="Suzuki M."/>
            <person name="Aoki J."/>
            <person name="Arakawa T."/>
            <person name="Iida J."/>
            <person name="Imamura K."/>
            <person name="Itoh M."/>
            <person name="Kato T."/>
            <person name="Kawaji H."/>
            <person name="Kawagashira N."/>
            <person name="Kawashima T."/>
            <person name="Kojima M."/>
            <person name="Kondo S."/>
            <person name="Konno H."/>
            <person name="Nakano K."/>
            <person name="Ninomiya N."/>
            <person name="Nishio T."/>
            <person name="Okada M."/>
            <person name="Plessy C."/>
            <person name="Shibata K."/>
            <person name="Shiraki T."/>
            <person name="Suzuki S."/>
            <person name="Tagami M."/>
            <person name="Waki K."/>
            <person name="Watahiki A."/>
            <person name="Okamura-Oho Y."/>
            <person name="Suzuki H."/>
            <person name="Kawai J."/>
            <person name="Hayashizaki Y."/>
        </authorList>
    </citation>
    <scope>NUCLEOTIDE SEQUENCE [LARGE SCALE MRNA]</scope>
    <source>
        <strain>C57BL/6J</strain>
        <tissue>Cerebellum</tissue>
    </source>
</reference>
<gene>
    <name type="primary">Spink13</name>
    <name type="synonym">Spink5l3</name>
</gene>
<accession>Q3UTS8</accession>
<comment type="function">
    <text evidence="1">May be a serine protease inhibitor (By similarity). Essential for sperm maturation and fertility. Inhibits sperm acrosome reaction, protecting sperm from premature reaction (By similarity).</text>
</comment>
<comment type="subcellular location">
    <subcellularLocation>
        <location evidence="1">Secreted</location>
    </subcellularLocation>
    <text evidence="1">Secreted into the lumen of the initial segment of the epididymis and binds to sperm. In the initial segment of epididymis, localizes on the dorsal surface of the acrosomal region of sperm, gradually becomes more restricted to the acrosomal region in spermatozoa during epididymal transit (By similarity).</text>
</comment>
<organism>
    <name type="scientific">Mus musculus</name>
    <name type="common">Mouse</name>
    <dbReference type="NCBI Taxonomy" id="10090"/>
    <lineage>
        <taxon>Eukaryota</taxon>
        <taxon>Metazoa</taxon>
        <taxon>Chordata</taxon>
        <taxon>Craniata</taxon>
        <taxon>Vertebrata</taxon>
        <taxon>Euteleostomi</taxon>
        <taxon>Mammalia</taxon>
        <taxon>Eutheria</taxon>
        <taxon>Euarchontoglires</taxon>
        <taxon>Glires</taxon>
        <taxon>Rodentia</taxon>
        <taxon>Myomorpha</taxon>
        <taxon>Muroidea</taxon>
        <taxon>Muridae</taxon>
        <taxon>Murinae</taxon>
        <taxon>Mus</taxon>
        <taxon>Mus</taxon>
    </lineage>
</organism>
<name>ISK13_MOUSE</name>
<proteinExistence type="inferred from homology"/>
<protein>
    <recommendedName>
        <fullName>Serine protease inhibitor Kazal-type 13</fullName>
    </recommendedName>
    <alternativeName>
        <fullName>Serine protease inhibitor Kazal-type 5-like 3</fullName>
    </alternativeName>
</protein>
<evidence type="ECO:0000250" key="1"/>
<evidence type="ECO:0000255" key="2"/>
<evidence type="ECO:0000255" key="3">
    <source>
        <dbReference type="PROSITE-ProRule" id="PRU00798"/>
    </source>
</evidence>